<sequence length="648" mass="72619">MPQNCIAPRPEEDGGVMVQGLPDMSDTQSKSVLAFPTITSQPGLQMSMYPITLKFEEVVYKVKIEQTSQCMGSWKSKEKTILNGITGMVCPGEFLAMLGPSGSGKTTLLSALGGRLSKTFSGKVMYNGQPFSGCIKRRTGFVAQDDVLYPHLTVWETLFFTALLRLPSSLTRDEKAEHVDRVIAELGLNRCTNSMIGGPLFRGISGGEKKRVSIGQEMLINPSLLLLDEPTSGLDSTTAHRIVTTIKRLASGGRTVVTTIHQPSSRIYHMFDKVVLLSEGSPIYYGAASSAVEYFSSLGFSTSLTVNPADLLLDLANGIPPDTQKETSEQEQKTVKETLVSAYEKNISTKLKAELCNAESHSYEYTKAAAKNLKSEQWCTTWWYQFTVLLQRGVRERRFESFNKLRIFQVISVAFLGGLLWWHTPKSHIQDRTALLFFFSVFWGFYPLYNAVFTFPQEKRMLIKERSSGMYRLSSYFMARNVGDLPLELALPTAFVFIIYWMGGLKPDPTTFILSLLVVLYSVLVAQGLGLAFGALLMNIKQATTLASVTTLVFLIAGGYYVQQIPPFIVWLKYLSYSYYCYKLLLGIQYTDDDYYECSKGVWCRVGDFPAIKSMGLNNLWIDVFVMGVMLVGYRLMAYMALHRVKLR</sequence>
<name>AB14G_ARATH</name>
<evidence type="ECO:0000255" key="1"/>
<evidence type="ECO:0000255" key="2">
    <source>
        <dbReference type="PROSITE-ProRule" id="PRU00434"/>
    </source>
</evidence>
<evidence type="ECO:0000255" key="3">
    <source>
        <dbReference type="PROSITE-ProRule" id="PRU00498"/>
    </source>
</evidence>
<evidence type="ECO:0000269" key="4">
    <source>
    </source>
</evidence>
<evidence type="ECO:0000269" key="5">
    <source>
    </source>
</evidence>
<evidence type="ECO:0000269" key="6">
    <source>
    </source>
</evidence>
<evidence type="ECO:0000269" key="7">
    <source>
    </source>
</evidence>
<evidence type="ECO:0000269" key="8">
    <source>
    </source>
</evidence>
<evidence type="ECO:0000303" key="9">
    <source>
    </source>
</evidence>
<evidence type="ECO:0000303" key="10">
    <source>
    </source>
</evidence>
<evidence type="ECO:0000303" key="11">
    <source>
    </source>
</evidence>
<evidence type="ECO:0000303" key="12">
    <source>
    </source>
</evidence>
<evidence type="ECO:0000305" key="13"/>
<evidence type="ECO:0000312" key="14">
    <source>
        <dbReference type="Araport" id="AT1G31770"/>
    </source>
</evidence>
<evidence type="ECO:0000312" key="15">
    <source>
        <dbReference type="EMBL" id="AAG50724.1"/>
    </source>
</evidence>
<evidence type="ECO:0000312" key="16">
    <source>
        <dbReference type="EMBL" id="AAG60152.1"/>
    </source>
</evidence>
<reference key="1">
    <citation type="journal article" date="2000" name="Nature">
        <title>Sequence and analysis of chromosome 1 of the plant Arabidopsis thaliana.</title>
        <authorList>
            <person name="Theologis A."/>
            <person name="Ecker J.R."/>
            <person name="Palm C.J."/>
            <person name="Federspiel N.A."/>
            <person name="Kaul S."/>
            <person name="White O."/>
            <person name="Alonso J."/>
            <person name="Altafi H."/>
            <person name="Araujo R."/>
            <person name="Bowman C.L."/>
            <person name="Brooks S.Y."/>
            <person name="Buehler E."/>
            <person name="Chan A."/>
            <person name="Chao Q."/>
            <person name="Chen H."/>
            <person name="Cheuk R.F."/>
            <person name="Chin C.W."/>
            <person name="Chung M.K."/>
            <person name="Conn L."/>
            <person name="Conway A.B."/>
            <person name="Conway A.R."/>
            <person name="Creasy T.H."/>
            <person name="Dewar K."/>
            <person name="Dunn P."/>
            <person name="Etgu P."/>
            <person name="Feldblyum T.V."/>
            <person name="Feng J.-D."/>
            <person name="Fong B."/>
            <person name="Fujii C.Y."/>
            <person name="Gill J.E."/>
            <person name="Goldsmith A.D."/>
            <person name="Haas B."/>
            <person name="Hansen N.F."/>
            <person name="Hughes B."/>
            <person name="Huizar L."/>
            <person name="Hunter J.L."/>
            <person name="Jenkins J."/>
            <person name="Johnson-Hopson C."/>
            <person name="Khan S."/>
            <person name="Khaykin E."/>
            <person name="Kim C.J."/>
            <person name="Koo H.L."/>
            <person name="Kremenetskaia I."/>
            <person name="Kurtz D.B."/>
            <person name="Kwan A."/>
            <person name="Lam B."/>
            <person name="Langin-Hooper S."/>
            <person name="Lee A."/>
            <person name="Lee J.M."/>
            <person name="Lenz C.A."/>
            <person name="Li J.H."/>
            <person name="Li Y.-P."/>
            <person name="Lin X."/>
            <person name="Liu S.X."/>
            <person name="Liu Z.A."/>
            <person name="Luros J.S."/>
            <person name="Maiti R."/>
            <person name="Marziali A."/>
            <person name="Militscher J."/>
            <person name="Miranda M."/>
            <person name="Nguyen M."/>
            <person name="Nierman W.C."/>
            <person name="Osborne B.I."/>
            <person name="Pai G."/>
            <person name="Peterson J."/>
            <person name="Pham P.K."/>
            <person name="Rizzo M."/>
            <person name="Rooney T."/>
            <person name="Rowley D."/>
            <person name="Sakano H."/>
            <person name="Salzberg S.L."/>
            <person name="Schwartz J.R."/>
            <person name="Shinn P."/>
            <person name="Southwick A.M."/>
            <person name="Sun H."/>
            <person name="Tallon L.J."/>
            <person name="Tambunga G."/>
            <person name="Toriumi M.J."/>
            <person name="Town C.D."/>
            <person name="Utterback T."/>
            <person name="Van Aken S."/>
            <person name="Vaysberg M."/>
            <person name="Vysotskaia V.S."/>
            <person name="Walker M."/>
            <person name="Wu D."/>
            <person name="Yu G."/>
            <person name="Fraser C.M."/>
            <person name="Venter J.C."/>
            <person name="Davis R.W."/>
        </authorList>
    </citation>
    <scope>NUCLEOTIDE SEQUENCE [LARGE SCALE GENOMIC DNA]</scope>
    <source>
        <strain>cv. Columbia</strain>
    </source>
</reference>
<reference key="2">
    <citation type="journal article" date="2017" name="Plant J.">
        <title>Araport11: a complete reannotation of the Arabidopsis thaliana reference genome.</title>
        <authorList>
            <person name="Cheng C.Y."/>
            <person name="Krishnakumar V."/>
            <person name="Chan A.P."/>
            <person name="Thibaud-Nissen F."/>
            <person name="Schobel S."/>
            <person name="Town C.D."/>
        </authorList>
    </citation>
    <scope>GENOME REANNOTATION</scope>
    <source>
        <strain>cv. Columbia</strain>
    </source>
</reference>
<reference key="3">
    <citation type="journal article" date="2002" name="Science">
        <title>Functional annotation of a full-length Arabidopsis cDNA collection.</title>
        <authorList>
            <person name="Seki M."/>
            <person name="Narusaka M."/>
            <person name="Kamiya A."/>
            <person name="Ishida J."/>
            <person name="Satou M."/>
            <person name="Sakurai T."/>
            <person name="Nakajima M."/>
            <person name="Enju A."/>
            <person name="Akiyama K."/>
            <person name="Oono Y."/>
            <person name="Muramatsu M."/>
            <person name="Hayashizaki Y."/>
            <person name="Kawai J."/>
            <person name="Carninci P."/>
            <person name="Itoh M."/>
            <person name="Ishii Y."/>
            <person name="Arakawa T."/>
            <person name="Shibata K."/>
            <person name="Shinagawa A."/>
            <person name="Shinozaki K."/>
        </authorList>
    </citation>
    <scope>NUCLEOTIDE SEQUENCE [LARGE SCALE MRNA]</scope>
    <source>
        <strain>cv. Columbia</strain>
    </source>
</reference>
<reference key="4">
    <citation type="submission" date="2002-03" db="EMBL/GenBank/DDBJ databases">
        <title>Full-length cDNA from Arabidopsis thaliana.</title>
        <authorList>
            <person name="Brover V.V."/>
            <person name="Troukhan M.E."/>
            <person name="Alexandrov N.A."/>
            <person name="Lu Y.-P."/>
            <person name="Flavell R.B."/>
            <person name="Feldmann K.A."/>
        </authorList>
    </citation>
    <scope>NUCLEOTIDE SEQUENCE [LARGE SCALE MRNA]</scope>
</reference>
<reference key="5">
    <citation type="journal article" date="2001" name="J. Biol. Chem.">
        <title>The Arabidopsis thaliana ABC protein superfamily, a complete inventory.</title>
        <authorList>
            <person name="Sanchez-Fernandez R."/>
            <person name="Davies T.G."/>
            <person name="Coleman J.O."/>
            <person name="Rea P.A."/>
        </authorList>
    </citation>
    <scope>GENE FAMILY</scope>
    <scope>NOMENCLATURE</scope>
</reference>
<reference key="6">
    <citation type="journal article" date="2008" name="Trends Plant Sci.">
        <title>Plant ABC proteins - a unified nomenclature and updated inventory.</title>
        <authorList>
            <person name="Verrier P.J."/>
            <person name="Bird D."/>
            <person name="Burla B."/>
            <person name="Dassa E."/>
            <person name="Forestier C."/>
            <person name="Geisler M."/>
            <person name="Klein M."/>
            <person name="Kolukisaoglu H.U."/>
            <person name="Lee Y."/>
            <person name="Martinoia E."/>
            <person name="Murphy A."/>
            <person name="Rea P.A."/>
            <person name="Samuels L."/>
            <person name="Schulz B."/>
            <person name="Spalding E.J."/>
            <person name="Yazaki K."/>
            <person name="Theodoulou F.L."/>
        </authorList>
    </citation>
    <scope>GENE FAMILY</scope>
    <scope>NOMENCLATURE</scope>
</reference>
<reference key="7">
    <citation type="journal article" date="2013" name="Plant J.">
        <title>ABCG9, ABCG11 and ABCG14 ABC transporters are required for vascular development in Arabidopsis.</title>
        <authorList>
            <person name="Le Hir R."/>
            <person name="Sorin C."/>
            <person name="Chakraborti D."/>
            <person name="Moritz T."/>
            <person name="Schaller H."/>
            <person name="Tellier F."/>
            <person name="Robert S."/>
            <person name="Morin H."/>
            <person name="Bako L."/>
            <person name="Bellini C."/>
        </authorList>
    </citation>
    <scope>FUNCTION</scope>
    <scope>DISRUPTION PHENOTYPE</scope>
    <scope>TISSUE SPECIFICITY</scope>
    <scope>DEVELOPMENTAL STAGE</scope>
    <scope>SUBCELLULAR LOCATION</scope>
    <scope>INTERACTION WITH ABCG11</scope>
    <source>
        <strain>cv. Columbia</strain>
    </source>
</reference>
<reference key="8">
    <citation type="journal article" date="2014" name="Nat. Commun.">
        <title>Arabidopsis ABCG14 protein controls the acropetal translocation of root-synthesized cytokinins.</title>
        <authorList>
            <person name="Zhang K."/>
            <person name="Novak O."/>
            <person name="Wei Z."/>
            <person name="Gou M."/>
            <person name="Zhang X."/>
            <person name="Yu Y."/>
            <person name="Yang H."/>
            <person name="Cai Y."/>
            <person name="Strnad M."/>
            <person name="Liu C.-J."/>
        </authorList>
    </citation>
    <scope>FUNCTION</scope>
    <scope>DISRUPTION PHENOTYPE</scope>
    <scope>TISSUE SPECIFICITY</scope>
    <scope>DEVELOPMENTAL STAGE</scope>
    <scope>SUBCELLULAR LOCATION</scope>
    <source>
        <strain>cv. Columbia</strain>
    </source>
</reference>
<reference key="9">
    <citation type="journal article" date="2014" name="Proc. Natl. Acad. Sci. U.S.A.">
        <title>Arabidopsis ABCG14 is essential for the root-to-shoot translocation of cytokinin.</title>
        <authorList>
            <person name="Ko D."/>
            <person name="Kang J."/>
            <person name="Kiba T."/>
            <person name="Park J."/>
            <person name="Kojima M."/>
            <person name="Do J."/>
            <person name="Kim K.Y."/>
            <person name="Kwon M."/>
            <person name="Endler A."/>
            <person name="Song W.-Y."/>
            <person name="Martinoia E."/>
            <person name="Sakakibara H."/>
            <person name="Lee Y."/>
        </authorList>
    </citation>
    <scope>FUNCTION</scope>
    <scope>DISRUPTION PHENOTYPE</scope>
    <scope>TISSUE SPECIFICITY</scope>
    <scope>DEVELOPMENTAL STAGE</scope>
    <scope>SUBCELLULAR LOCATION</scope>
</reference>
<reference key="10">
    <citation type="journal article" date="2015" name="Biochem. Soc. Trans.">
        <title>The role of ABCG-type ABC transporters in phytohormone transport.</title>
        <authorList>
            <person name="Borghi L."/>
            <person name="Kang J."/>
            <person name="Ko D."/>
            <person name="Lee Y."/>
            <person name="Martinoia E."/>
        </authorList>
    </citation>
    <scope>REVIEW ON PHYTOHORMONE TRANSPORT</scope>
</reference>
<reference key="11">
    <citation type="journal article" date="2016" name="Plant Physiol.">
        <title>Cytokinin response factor 6 represses cytokinin-associated genes during oxidative stress.</title>
        <authorList>
            <person name="Zwack P.J."/>
            <person name="De Clercq I."/>
            <person name="Howton T.C."/>
            <person name="Hallmark H.T."/>
            <person name="Hurny A."/>
            <person name="Keshishian E.A."/>
            <person name="Parish A.M."/>
            <person name="Benkova E."/>
            <person name="Mukhtar M.S."/>
            <person name="Van Breusegem F."/>
            <person name="Rashotte A.M."/>
        </authorList>
    </citation>
    <scope>FUNCTION</scope>
    <scope>DISRUPTION PHENOTYPE</scope>
    <scope>REPRESSION BY HYDROGEN PEROXIDE</scope>
    <source>
        <strain>cv. Col-4</strain>
    </source>
</reference>
<reference key="12">
    <citation type="journal article" date="2017" name="Mol. Plant Microbe Interact.">
        <title>A role of cytokinin transporter in Arabidopsis immunity.</title>
        <authorList>
            <person name="Wang S."/>
            <person name="Wang S."/>
            <person name="Sun Q."/>
            <person name="Yang L."/>
            <person name="Zhu Y."/>
            <person name="Yuan Y."/>
            <person name="Hua J."/>
        </authorList>
    </citation>
    <scope>FUNCTION (MICROBIAL INFECTION)</scope>
    <scope>DISRUPTION PHENOTYPE</scope>
    <source>
        <strain>cv. Columbia</strain>
    </source>
</reference>
<accession>Q9C6W5</accession>
<accession>Q9C6R7</accession>
<keyword id="KW-0067">ATP-binding</keyword>
<keyword id="KW-1003">Cell membrane</keyword>
<keyword id="KW-0932">Cytokinin signaling pathway</keyword>
<keyword id="KW-0217">Developmental protein</keyword>
<keyword id="KW-0325">Glycoprotein</keyword>
<keyword id="KW-0472">Membrane</keyword>
<keyword id="KW-0547">Nucleotide-binding</keyword>
<keyword id="KW-0611">Plant defense</keyword>
<keyword id="KW-1185">Reference proteome</keyword>
<keyword id="KW-0346">Stress response</keyword>
<keyword id="KW-0812">Transmembrane</keyword>
<keyword id="KW-1133">Transmembrane helix</keyword>
<keyword id="KW-0813">Transport</keyword>
<organism>
    <name type="scientific">Arabidopsis thaliana</name>
    <name type="common">Mouse-ear cress</name>
    <dbReference type="NCBI Taxonomy" id="3702"/>
    <lineage>
        <taxon>Eukaryota</taxon>
        <taxon>Viridiplantae</taxon>
        <taxon>Streptophyta</taxon>
        <taxon>Embryophyta</taxon>
        <taxon>Tracheophyta</taxon>
        <taxon>Spermatophyta</taxon>
        <taxon>Magnoliopsida</taxon>
        <taxon>eudicotyledons</taxon>
        <taxon>Gunneridae</taxon>
        <taxon>Pentapetalae</taxon>
        <taxon>rosids</taxon>
        <taxon>malvids</taxon>
        <taxon>Brassicales</taxon>
        <taxon>Brassicaceae</taxon>
        <taxon>Camelineae</taxon>
        <taxon>Arabidopsis</taxon>
    </lineage>
</organism>
<dbReference type="EMBL" id="AC074360">
    <property type="protein sequence ID" value="AAG60152.1"/>
    <property type="molecule type" value="Genomic_DNA"/>
</dbReference>
<dbReference type="EMBL" id="AC079041">
    <property type="protein sequence ID" value="AAG50724.1"/>
    <property type="status" value="ALT_SEQ"/>
    <property type="molecule type" value="Genomic_DNA"/>
</dbReference>
<dbReference type="EMBL" id="CP002684">
    <property type="protein sequence ID" value="AEE31390.1"/>
    <property type="molecule type" value="Genomic_DNA"/>
</dbReference>
<dbReference type="EMBL" id="AK117530">
    <property type="protein sequence ID" value="BAC42192.1"/>
    <property type="molecule type" value="mRNA"/>
</dbReference>
<dbReference type="EMBL" id="AY088793">
    <property type="protein sequence ID" value="AAM67104.1"/>
    <property type="molecule type" value="mRNA"/>
</dbReference>
<dbReference type="PIR" id="C86441">
    <property type="entry name" value="C86441"/>
</dbReference>
<dbReference type="RefSeq" id="NP_564383.1">
    <property type="nucleotide sequence ID" value="NM_102911.3"/>
</dbReference>
<dbReference type="SMR" id="Q9C6W5"/>
<dbReference type="BioGRID" id="25298">
    <property type="interactions" value="1"/>
</dbReference>
<dbReference type="FunCoup" id="Q9C6W5">
    <property type="interactions" value="593"/>
</dbReference>
<dbReference type="STRING" id="3702.Q9C6W5"/>
<dbReference type="TCDB" id="3.A.1.204.29">
    <property type="family name" value="the atp-binding cassette (abc) superfamily"/>
</dbReference>
<dbReference type="GlyCosmos" id="Q9C6W5">
    <property type="glycosylation" value="1 site, No reported glycans"/>
</dbReference>
<dbReference type="GlyGen" id="Q9C6W5">
    <property type="glycosylation" value="1 site"/>
</dbReference>
<dbReference type="PaxDb" id="3702-AT1G31770.1"/>
<dbReference type="ProteomicsDB" id="244559"/>
<dbReference type="EnsemblPlants" id="AT1G31770.1">
    <property type="protein sequence ID" value="AT1G31770.1"/>
    <property type="gene ID" value="AT1G31770"/>
</dbReference>
<dbReference type="GeneID" id="840064"/>
<dbReference type="Gramene" id="AT1G31770.1">
    <property type="protein sequence ID" value="AT1G31770.1"/>
    <property type="gene ID" value="AT1G31770"/>
</dbReference>
<dbReference type="KEGG" id="ath:AT1G31770"/>
<dbReference type="Araport" id="AT1G31770"/>
<dbReference type="TAIR" id="AT1G31770">
    <property type="gene designation" value="ABCG14"/>
</dbReference>
<dbReference type="eggNOG" id="KOG0061">
    <property type="taxonomic scope" value="Eukaryota"/>
</dbReference>
<dbReference type="HOGENOM" id="CLU_000604_57_10_1"/>
<dbReference type="InParanoid" id="Q9C6W5"/>
<dbReference type="OMA" id="WIDVCIM"/>
<dbReference type="PhylomeDB" id="Q9C6W5"/>
<dbReference type="PRO" id="PR:Q9C6W5"/>
<dbReference type="Proteomes" id="UP000006548">
    <property type="component" value="Chromosome 1"/>
</dbReference>
<dbReference type="ExpressionAtlas" id="Q9C6W5">
    <property type="expression patterns" value="baseline and differential"/>
</dbReference>
<dbReference type="GO" id="GO:0005886">
    <property type="term" value="C:plasma membrane"/>
    <property type="evidence" value="ECO:0000314"/>
    <property type="project" value="UniProtKB"/>
</dbReference>
<dbReference type="GO" id="GO:0140359">
    <property type="term" value="F:ABC-type transporter activity"/>
    <property type="evidence" value="ECO:0007669"/>
    <property type="project" value="InterPro"/>
</dbReference>
<dbReference type="GO" id="GO:0005524">
    <property type="term" value="F:ATP binding"/>
    <property type="evidence" value="ECO:0007669"/>
    <property type="project" value="UniProtKB-KW"/>
</dbReference>
<dbReference type="GO" id="GO:0016887">
    <property type="term" value="F:ATP hydrolysis activity"/>
    <property type="evidence" value="ECO:0007669"/>
    <property type="project" value="InterPro"/>
</dbReference>
<dbReference type="GO" id="GO:0042626">
    <property type="term" value="F:ATPase-coupled transmembrane transporter activity"/>
    <property type="evidence" value="ECO:0000314"/>
    <property type="project" value="UniProtKB"/>
</dbReference>
<dbReference type="GO" id="GO:0015562">
    <property type="term" value="F:efflux transmembrane transporter activity"/>
    <property type="evidence" value="ECO:0000315"/>
    <property type="project" value="UniProtKB"/>
</dbReference>
<dbReference type="GO" id="GO:0010588">
    <property type="term" value="P:cotyledon vascular tissue pattern formation"/>
    <property type="evidence" value="ECO:0000315"/>
    <property type="project" value="TAIR"/>
</dbReference>
<dbReference type="GO" id="GO:0010184">
    <property type="term" value="P:cytokinin transport"/>
    <property type="evidence" value="ECO:0000315"/>
    <property type="project" value="UniProtKB"/>
</dbReference>
<dbReference type="GO" id="GO:0009736">
    <property type="term" value="P:cytokinin-activated signaling pathway"/>
    <property type="evidence" value="ECO:0000315"/>
    <property type="project" value="UniProtKB"/>
</dbReference>
<dbReference type="GO" id="GO:0042742">
    <property type="term" value="P:defense response to bacterium"/>
    <property type="evidence" value="ECO:0000315"/>
    <property type="project" value="UniProtKB"/>
</dbReference>
<dbReference type="GO" id="GO:0140115">
    <property type="term" value="P:export across plasma membrane"/>
    <property type="evidence" value="ECO:0000314"/>
    <property type="project" value="UniProtKB"/>
</dbReference>
<dbReference type="GO" id="GO:0140352">
    <property type="term" value="P:export from cell"/>
    <property type="evidence" value="ECO:0000314"/>
    <property type="project" value="UniProtKB"/>
</dbReference>
<dbReference type="GO" id="GO:0042542">
    <property type="term" value="P:response to hydrogen peroxide"/>
    <property type="evidence" value="ECO:0000315"/>
    <property type="project" value="UniProtKB"/>
</dbReference>
<dbReference type="GO" id="GO:0010222">
    <property type="term" value="P:stem vascular tissue pattern formation"/>
    <property type="evidence" value="ECO:0000316"/>
    <property type="project" value="TAIR"/>
</dbReference>
<dbReference type="CDD" id="cd03213">
    <property type="entry name" value="ABCG_EPDR"/>
    <property type="match status" value="1"/>
</dbReference>
<dbReference type="FunFam" id="3.40.50.300:FF:000337">
    <property type="entry name" value="ABC transporter G family member 22"/>
    <property type="match status" value="1"/>
</dbReference>
<dbReference type="Gene3D" id="3.40.50.300">
    <property type="entry name" value="P-loop containing nucleotide triphosphate hydrolases"/>
    <property type="match status" value="1"/>
</dbReference>
<dbReference type="InterPro" id="IPR003593">
    <property type="entry name" value="AAA+_ATPase"/>
</dbReference>
<dbReference type="InterPro" id="IPR013525">
    <property type="entry name" value="ABC2_TM"/>
</dbReference>
<dbReference type="InterPro" id="IPR003439">
    <property type="entry name" value="ABC_transporter-like_ATP-bd"/>
</dbReference>
<dbReference type="InterPro" id="IPR017871">
    <property type="entry name" value="ABC_transporter-like_CS"/>
</dbReference>
<dbReference type="InterPro" id="IPR043926">
    <property type="entry name" value="ABCG_dom"/>
</dbReference>
<dbReference type="InterPro" id="IPR050352">
    <property type="entry name" value="ABCG_transporters"/>
</dbReference>
<dbReference type="InterPro" id="IPR027417">
    <property type="entry name" value="P-loop_NTPase"/>
</dbReference>
<dbReference type="PANTHER" id="PTHR48041:SF111">
    <property type="entry name" value="ABC TRANSPORTER G FAMILY MEMBER 14"/>
    <property type="match status" value="1"/>
</dbReference>
<dbReference type="PANTHER" id="PTHR48041">
    <property type="entry name" value="ABC TRANSPORTER G FAMILY MEMBER 28"/>
    <property type="match status" value="1"/>
</dbReference>
<dbReference type="Pfam" id="PF01061">
    <property type="entry name" value="ABC2_membrane"/>
    <property type="match status" value="1"/>
</dbReference>
<dbReference type="Pfam" id="PF19055">
    <property type="entry name" value="ABC2_membrane_7"/>
    <property type="match status" value="1"/>
</dbReference>
<dbReference type="Pfam" id="PF00005">
    <property type="entry name" value="ABC_tran"/>
    <property type="match status" value="1"/>
</dbReference>
<dbReference type="SMART" id="SM00382">
    <property type="entry name" value="AAA"/>
    <property type="match status" value="1"/>
</dbReference>
<dbReference type="SUPFAM" id="SSF52540">
    <property type="entry name" value="P-loop containing nucleoside triphosphate hydrolases"/>
    <property type="match status" value="1"/>
</dbReference>
<dbReference type="PROSITE" id="PS00211">
    <property type="entry name" value="ABC_TRANSPORTER_1"/>
    <property type="match status" value="1"/>
</dbReference>
<dbReference type="PROSITE" id="PS50893">
    <property type="entry name" value="ABC_TRANSPORTER_2"/>
    <property type="match status" value="1"/>
</dbReference>
<gene>
    <name evidence="10" type="primary">ABCG14</name>
    <name evidence="12" type="synonym">INT211</name>
    <name evidence="9" type="synonym">WBC14</name>
    <name evidence="14" type="ordered locus">At1g31770</name>
    <name evidence="16" type="ORF">F27M3.2</name>
    <name evidence="15" type="ORF">F5M6.22</name>
</gene>
<protein>
    <recommendedName>
        <fullName evidence="10">ABC transporter G family member 14</fullName>
        <shortName evidence="10">ABC transporter ABCG.14</shortName>
        <shortName evidence="10">AtABCG14</shortName>
    </recommendedName>
    <alternativeName>
        <fullName evidence="12">Protein INSENSITIVE TO TEMPERATURE 211</fullName>
    </alternativeName>
    <alternativeName>
        <fullName evidence="9">White-brown complex homolog protein 14</fullName>
        <shortName evidence="9">AtWBC14</shortName>
    </alternativeName>
</protein>
<proteinExistence type="evidence at protein level"/>
<comment type="function">
    <text evidence="4 5 6 7 8 11">Positive regulator of plant growth which acts as an efflux pump involved in the major root-to-shoot (acropetal) long-distance cytokinin (CK) transport via the xylem sap (PubMed:24513716, PubMed:24778257, PubMed:26517905, PubMed:28398838). Together with ABCG9 and ABCG11, required for vascular development by regulating lipid/sterol homeostasis (PubMed:24112720). Involved in CK-dependent responses to oxidative stress such as hydrogen peroxide H(2)O(2) (PubMed:27550996).</text>
</comment>
<comment type="function">
    <text evidence="8">(Microbial infection) Required for SNC1-mediated defense response against the virulent pathogen Pseudomonas syringae pv. tomato DC3000 by promoting the accumulation of trans-zeatin (tZ)-type cytokinins (CK) in the shoot.</text>
</comment>
<comment type="subunit">
    <text evidence="4 5">Forms heterodimers with ABCG11.</text>
</comment>
<comment type="subcellular location">
    <subcellularLocation>
        <location evidence="4 6">Cell membrane</location>
        <topology evidence="1">Multi-pass membrane protein</topology>
    </subcellularLocation>
</comment>
<comment type="tissue specificity">
    <text evidence="4 5 6">Accumulates primarily in the pericycle and stelar cells of roots (PubMed:24513716, PubMed:24778257). Expressed in leaves, stems, flowers and siliques, and, at low levels, in roots (PubMed:24112720, PubMed:24513716, PubMed:24778257). Accumulates in the phloem (PubMed:24112720).</text>
</comment>
<comment type="developmental stage">
    <text evidence="4 5 6">In roots, observed in the central cylinder (vascular tissues), but absent from division zones (PubMed:24112720, PubMed:24513716, PubMed:24778257). Present in the vascular system of the cotyledons and rosette leaves (PubMed:24112720, PubMed:24513716). Also observed in phloem cells of the flower stem (PubMed:24112720). Also accumulates in the mature anthers of open flowers and in siliques (PubMed:24513716).</text>
</comment>
<comment type="induction">
    <text evidence="7">Repressed by hydrogen peroxide H(2)O(2) in a CRF6-dependent manner.</text>
</comment>
<comment type="disruption phenotype">
    <text evidence="4 5 6 7 8">Weak growth, small inflorescences and rosettes, slender stems, and short and retarded primary root growth leading to dwarf plants (PubMed:24513716, PubMed:24778257, PubMed:28398838). Impaired translocation of trans-zeatin (tZ)-type cytokinins (CK) from roots to shoots (acropetal), thereby affecting the plant growth and development and leading to a reduced cytokinin content in xylem sap (PubMed:24513716, PubMed:24778257). Defective in sterol (e.g. 24-methylene cholesterol and sitosterol) composition (PubMed:24112720). Vascular patterning defects in cotyledons and the floral stem, with a stronger phenotype in plant missing also ABCG9 and ABCG11 (PubMed:24112720). Altered responses to oxidative stress (e.g. hydrogen peroxide H(2)O(2)) (PubMed:27550996). Suppression of the SNC1-mediated defense response due to a deficiency of tZ-type CK in the shoot (PubMed:28398838).</text>
</comment>
<comment type="similarity">
    <text evidence="13">Belongs to the ABC transporter superfamily. ABCG family. Eye pigment precursor importer (TC 3.A.1.204) subfamily.</text>
</comment>
<comment type="sequence caution" evidence="13">
    <conflict type="erroneous gene model prediction">
        <sequence resource="EMBL-CDS" id="AAG50724"/>
    </conflict>
</comment>
<feature type="chain" id="PRO_0000240686" description="ABC transporter G family member 14">
    <location>
        <begin position="1"/>
        <end position="648"/>
    </location>
</feature>
<feature type="transmembrane region" description="Helical" evidence="1">
    <location>
        <begin position="405"/>
        <end position="425"/>
    </location>
</feature>
<feature type="transmembrane region" description="Helical" evidence="1">
    <location>
        <begin position="435"/>
        <end position="455"/>
    </location>
</feature>
<feature type="transmembrane region" description="Helical" evidence="1">
    <location>
        <begin position="485"/>
        <end position="505"/>
    </location>
</feature>
<feature type="transmembrane region" description="Helical" evidence="1">
    <location>
        <begin position="512"/>
        <end position="532"/>
    </location>
</feature>
<feature type="transmembrane region" description="Helical" evidence="1">
    <location>
        <begin position="543"/>
        <end position="562"/>
    </location>
</feature>
<feature type="transmembrane region" description="Helical" evidence="1">
    <location>
        <begin position="569"/>
        <end position="591"/>
    </location>
</feature>
<feature type="transmembrane region" description="Helical" evidence="1">
    <location>
        <begin position="620"/>
        <end position="640"/>
    </location>
</feature>
<feature type="domain" description="ABC transporter" evidence="2">
    <location>
        <begin position="53"/>
        <end position="304"/>
    </location>
</feature>
<feature type="domain" description="ABC transmembrane type-2" evidence="1">
    <location>
        <begin position="384"/>
        <end position="590"/>
    </location>
</feature>
<feature type="binding site" evidence="2">
    <location>
        <begin position="99"/>
        <end position="106"/>
    </location>
    <ligand>
        <name>ATP</name>
        <dbReference type="ChEBI" id="CHEBI:30616"/>
    </ligand>
</feature>
<feature type="glycosylation site" description="N-linked (GlcNAc...) asparagine" evidence="3">
    <location>
        <position position="346"/>
    </location>
</feature>